<dbReference type="EC" id="3.1.3.78" evidence="2"/>
<dbReference type="EMBL" id="AK144251">
    <property type="protein sequence ID" value="BAE25798.1"/>
    <property type="molecule type" value="mRNA"/>
</dbReference>
<dbReference type="EMBL" id="AK159641">
    <property type="protein sequence ID" value="BAE35254.1"/>
    <property type="molecule type" value="mRNA"/>
</dbReference>
<dbReference type="EMBL" id="BC106163">
    <property type="protein sequence ID" value="AAI06164.1"/>
    <property type="molecule type" value="mRNA"/>
</dbReference>
<dbReference type="CCDS" id="CCDS27028.1"/>
<dbReference type="RefSeq" id="NP_001028443.1">
    <property type="nucleotide sequence ID" value="NM_001033271.5"/>
</dbReference>
<dbReference type="RefSeq" id="NP_001297434.1">
    <property type="nucleotide sequence ID" value="NM_001310505.1"/>
</dbReference>
<dbReference type="RefSeq" id="NP_001297435.1">
    <property type="nucleotide sequence ID" value="NM_001310506.1"/>
</dbReference>
<dbReference type="RefSeq" id="NP_001297436.1">
    <property type="nucleotide sequence ID" value="NM_001310507.1"/>
</dbReference>
<dbReference type="SMR" id="Q3TWL2"/>
<dbReference type="BioGRID" id="230098">
    <property type="interactions" value="1"/>
</dbReference>
<dbReference type="FunCoup" id="Q3TWL2">
    <property type="interactions" value="2617"/>
</dbReference>
<dbReference type="STRING" id="10090.ENSMUSP00000124782"/>
<dbReference type="iPTMnet" id="Q3TWL2"/>
<dbReference type="PhosphoSitePlus" id="Q3TWL2"/>
<dbReference type="SwissPalm" id="Q3TWL2"/>
<dbReference type="jPOST" id="Q3TWL2"/>
<dbReference type="PaxDb" id="10090-ENSMUSP00000124782"/>
<dbReference type="PeptideAtlas" id="Q3TWL2"/>
<dbReference type="ProteomicsDB" id="289376"/>
<dbReference type="Pumba" id="Q3TWL2"/>
<dbReference type="Antibodypedia" id="64010">
    <property type="antibodies" value="54 antibodies from 16 providers"/>
</dbReference>
<dbReference type="Ensembl" id="ENSMUST00000160835.9">
    <property type="protein sequence ID" value="ENSMUSP00000124782.2"/>
    <property type="gene ID" value="ENSMUSG00000035953.15"/>
</dbReference>
<dbReference type="GeneID" id="219024"/>
<dbReference type="KEGG" id="mmu:219024"/>
<dbReference type="UCSC" id="uc007tma.1">
    <property type="organism name" value="mouse"/>
</dbReference>
<dbReference type="AGR" id="MGI:2448501"/>
<dbReference type="CTD" id="90809"/>
<dbReference type="MGI" id="MGI:2448501">
    <property type="gene designation" value="Pip4p1"/>
</dbReference>
<dbReference type="VEuPathDB" id="HostDB:ENSMUSG00000035953"/>
<dbReference type="eggNOG" id="KOG4684">
    <property type="taxonomic scope" value="Eukaryota"/>
</dbReference>
<dbReference type="GeneTree" id="ENSGT00390000003680"/>
<dbReference type="InParanoid" id="Q3TWL2"/>
<dbReference type="OMA" id="CKNSFLW"/>
<dbReference type="OrthoDB" id="9939933at2759"/>
<dbReference type="PhylomeDB" id="Q3TWL2"/>
<dbReference type="TreeFam" id="TF316367"/>
<dbReference type="Reactome" id="R-MMU-6811555">
    <property type="pathway name" value="PI5P Regulates TP53 Acetylation"/>
</dbReference>
<dbReference type="Reactome" id="R-MMU-8847453">
    <property type="pathway name" value="Synthesis of PIPs in the nucleus"/>
</dbReference>
<dbReference type="BioGRID-ORCS" id="219024">
    <property type="hits" value="4 hits in 79 CRISPR screens"/>
</dbReference>
<dbReference type="PRO" id="PR:Q3TWL2"/>
<dbReference type="Proteomes" id="UP000000589">
    <property type="component" value="Chromosome 14"/>
</dbReference>
<dbReference type="RNAct" id="Q3TWL2">
    <property type="molecule type" value="protein"/>
</dbReference>
<dbReference type="Bgee" id="ENSMUSG00000035953">
    <property type="expression patterns" value="Expressed in retinal neural layer and 224 other cell types or tissues"/>
</dbReference>
<dbReference type="ExpressionAtlas" id="Q3TWL2">
    <property type="expression patterns" value="baseline and differential"/>
</dbReference>
<dbReference type="GO" id="GO:0031902">
    <property type="term" value="C:late endosome membrane"/>
    <property type="evidence" value="ECO:0000314"/>
    <property type="project" value="UniProtKB"/>
</dbReference>
<dbReference type="GO" id="GO:0005765">
    <property type="term" value="C:lysosomal membrane"/>
    <property type="evidence" value="ECO:0000314"/>
    <property type="project" value="UniProtKB"/>
</dbReference>
<dbReference type="GO" id="GO:0030670">
    <property type="term" value="C:phagocytic vesicle membrane"/>
    <property type="evidence" value="ECO:0000314"/>
    <property type="project" value="UniProtKB"/>
</dbReference>
<dbReference type="GO" id="GO:0005886">
    <property type="term" value="C:plasma membrane"/>
    <property type="evidence" value="ECO:0000314"/>
    <property type="project" value="UniProtKB"/>
</dbReference>
<dbReference type="GO" id="GO:0034597">
    <property type="term" value="F:phosphatidylinositol-4,5-bisphosphate 4-phosphatase activity"/>
    <property type="evidence" value="ECO:0007669"/>
    <property type="project" value="UniProtKB-EC"/>
</dbReference>
<dbReference type="GO" id="GO:0008203">
    <property type="term" value="P:cholesterol metabolic process"/>
    <property type="evidence" value="ECO:0000250"/>
    <property type="project" value="UniProtKB"/>
</dbReference>
<dbReference type="GO" id="GO:0032418">
    <property type="term" value="P:lysosome localization"/>
    <property type="evidence" value="ECO:0000250"/>
    <property type="project" value="UniProtKB"/>
</dbReference>
<dbReference type="GO" id="GO:0046856">
    <property type="term" value="P:phosphatidylinositol dephosphorylation"/>
    <property type="evidence" value="ECO:0007669"/>
    <property type="project" value="Ensembl"/>
</dbReference>
<dbReference type="GO" id="GO:1904263">
    <property type="term" value="P:positive regulation of TORC1 signaling"/>
    <property type="evidence" value="ECO:0000315"/>
    <property type="project" value="UniProtKB"/>
</dbReference>
<dbReference type="GO" id="GO:0070070">
    <property type="term" value="P:proton-transporting V-type ATPase complex assembly"/>
    <property type="evidence" value="ECO:0000315"/>
    <property type="project" value="UniProtKB"/>
</dbReference>
<dbReference type="GO" id="GO:0006991">
    <property type="term" value="P:response to sterol depletion"/>
    <property type="evidence" value="ECO:0000250"/>
    <property type="project" value="UniProtKB"/>
</dbReference>
<dbReference type="InterPro" id="IPR019178">
    <property type="entry name" value="PtdIns-P2-Ptase"/>
</dbReference>
<dbReference type="PANTHER" id="PTHR21014">
    <property type="entry name" value="PHOSPHATIDYLINOSITOL-4,5-BISPHOSPHATE 4-PHOSPHATASE"/>
    <property type="match status" value="1"/>
</dbReference>
<dbReference type="PANTHER" id="PTHR21014:SF2">
    <property type="entry name" value="TYPE 1 PHOSPHATIDYLINOSITOL 4,5-BISPHOSPHATE 4-PHOSPHATASE"/>
    <property type="match status" value="1"/>
</dbReference>
<dbReference type="Pfam" id="PF09788">
    <property type="entry name" value="Tmemb_55A"/>
    <property type="match status" value="1"/>
</dbReference>
<name>PP4P1_MOUSE</name>
<organism>
    <name type="scientific">Mus musculus</name>
    <name type="common">Mouse</name>
    <dbReference type="NCBI Taxonomy" id="10090"/>
    <lineage>
        <taxon>Eukaryota</taxon>
        <taxon>Metazoa</taxon>
        <taxon>Chordata</taxon>
        <taxon>Craniata</taxon>
        <taxon>Vertebrata</taxon>
        <taxon>Euteleostomi</taxon>
        <taxon>Mammalia</taxon>
        <taxon>Eutheria</taxon>
        <taxon>Euarchontoglires</taxon>
        <taxon>Glires</taxon>
        <taxon>Rodentia</taxon>
        <taxon>Myomorpha</taxon>
        <taxon>Muroidea</taxon>
        <taxon>Muridae</taxon>
        <taxon>Murinae</taxon>
        <taxon>Mus</taxon>
        <taxon>Mus</taxon>
    </lineage>
</organism>
<evidence type="ECO:0000250" key="1"/>
<evidence type="ECO:0000250" key="2">
    <source>
        <dbReference type="UniProtKB" id="Q86T03"/>
    </source>
</evidence>
<evidence type="ECO:0000255" key="3"/>
<evidence type="ECO:0000256" key="4">
    <source>
        <dbReference type="SAM" id="MobiDB-lite"/>
    </source>
</evidence>
<evidence type="ECO:0000269" key="5">
    <source>
    </source>
</evidence>
<evidence type="ECO:0000269" key="6">
    <source>
    </source>
</evidence>
<evidence type="ECO:0007744" key="7">
    <source>
    </source>
</evidence>
<proteinExistence type="evidence at protein level"/>
<reference key="1">
    <citation type="journal article" date="2005" name="Science">
        <title>The transcriptional landscape of the mammalian genome.</title>
        <authorList>
            <person name="Carninci P."/>
            <person name="Kasukawa T."/>
            <person name="Katayama S."/>
            <person name="Gough J."/>
            <person name="Frith M.C."/>
            <person name="Maeda N."/>
            <person name="Oyama R."/>
            <person name="Ravasi T."/>
            <person name="Lenhard B."/>
            <person name="Wells C."/>
            <person name="Kodzius R."/>
            <person name="Shimokawa K."/>
            <person name="Bajic V.B."/>
            <person name="Brenner S.E."/>
            <person name="Batalov S."/>
            <person name="Forrest A.R."/>
            <person name="Zavolan M."/>
            <person name="Davis M.J."/>
            <person name="Wilming L.G."/>
            <person name="Aidinis V."/>
            <person name="Allen J.E."/>
            <person name="Ambesi-Impiombato A."/>
            <person name="Apweiler R."/>
            <person name="Aturaliya R.N."/>
            <person name="Bailey T.L."/>
            <person name="Bansal M."/>
            <person name="Baxter L."/>
            <person name="Beisel K.W."/>
            <person name="Bersano T."/>
            <person name="Bono H."/>
            <person name="Chalk A.M."/>
            <person name="Chiu K.P."/>
            <person name="Choudhary V."/>
            <person name="Christoffels A."/>
            <person name="Clutterbuck D.R."/>
            <person name="Crowe M.L."/>
            <person name="Dalla E."/>
            <person name="Dalrymple B.P."/>
            <person name="de Bono B."/>
            <person name="Della Gatta G."/>
            <person name="di Bernardo D."/>
            <person name="Down T."/>
            <person name="Engstrom P."/>
            <person name="Fagiolini M."/>
            <person name="Faulkner G."/>
            <person name="Fletcher C.F."/>
            <person name="Fukushima T."/>
            <person name="Furuno M."/>
            <person name="Futaki S."/>
            <person name="Gariboldi M."/>
            <person name="Georgii-Hemming P."/>
            <person name="Gingeras T.R."/>
            <person name="Gojobori T."/>
            <person name="Green R.E."/>
            <person name="Gustincich S."/>
            <person name="Harbers M."/>
            <person name="Hayashi Y."/>
            <person name="Hensch T.K."/>
            <person name="Hirokawa N."/>
            <person name="Hill D."/>
            <person name="Huminiecki L."/>
            <person name="Iacono M."/>
            <person name="Ikeo K."/>
            <person name="Iwama A."/>
            <person name="Ishikawa T."/>
            <person name="Jakt M."/>
            <person name="Kanapin A."/>
            <person name="Katoh M."/>
            <person name="Kawasawa Y."/>
            <person name="Kelso J."/>
            <person name="Kitamura H."/>
            <person name="Kitano H."/>
            <person name="Kollias G."/>
            <person name="Krishnan S.P."/>
            <person name="Kruger A."/>
            <person name="Kummerfeld S.K."/>
            <person name="Kurochkin I.V."/>
            <person name="Lareau L.F."/>
            <person name="Lazarevic D."/>
            <person name="Lipovich L."/>
            <person name="Liu J."/>
            <person name="Liuni S."/>
            <person name="McWilliam S."/>
            <person name="Madan Babu M."/>
            <person name="Madera M."/>
            <person name="Marchionni L."/>
            <person name="Matsuda H."/>
            <person name="Matsuzawa S."/>
            <person name="Miki H."/>
            <person name="Mignone F."/>
            <person name="Miyake S."/>
            <person name="Morris K."/>
            <person name="Mottagui-Tabar S."/>
            <person name="Mulder N."/>
            <person name="Nakano N."/>
            <person name="Nakauchi H."/>
            <person name="Ng P."/>
            <person name="Nilsson R."/>
            <person name="Nishiguchi S."/>
            <person name="Nishikawa S."/>
            <person name="Nori F."/>
            <person name="Ohara O."/>
            <person name="Okazaki Y."/>
            <person name="Orlando V."/>
            <person name="Pang K.C."/>
            <person name="Pavan W.J."/>
            <person name="Pavesi G."/>
            <person name="Pesole G."/>
            <person name="Petrovsky N."/>
            <person name="Piazza S."/>
            <person name="Reed J."/>
            <person name="Reid J.F."/>
            <person name="Ring B.Z."/>
            <person name="Ringwald M."/>
            <person name="Rost B."/>
            <person name="Ruan Y."/>
            <person name="Salzberg S.L."/>
            <person name="Sandelin A."/>
            <person name="Schneider C."/>
            <person name="Schoenbach C."/>
            <person name="Sekiguchi K."/>
            <person name="Semple C.A."/>
            <person name="Seno S."/>
            <person name="Sessa L."/>
            <person name="Sheng Y."/>
            <person name="Shibata Y."/>
            <person name="Shimada H."/>
            <person name="Shimada K."/>
            <person name="Silva D."/>
            <person name="Sinclair B."/>
            <person name="Sperling S."/>
            <person name="Stupka E."/>
            <person name="Sugiura K."/>
            <person name="Sultana R."/>
            <person name="Takenaka Y."/>
            <person name="Taki K."/>
            <person name="Tammoja K."/>
            <person name="Tan S.L."/>
            <person name="Tang S."/>
            <person name="Taylor M.S."/>
            <person name="Tegner J."/>
            <person name="Teichmann S.A."/>
            <person name="Ueda H.R."/>
            <person name="van Nimwegen E."/>
            <person name="Verardo R."/>
            <person name="Wei C.L."/>
            <person name="Yagi K."/>
            <person name="Yamanishi H."/>
            <person name="Zabarovsky E."/>
            <person name="Zhu S."/>
            <person name="Zimmer A."/>
            <person name="Hide W."/>
            <person name="Bult C."/>
            <person name="Grimmond S.M."/>
            <person name="Teasdale R.D."/>
            <person name="Liu E.T."/>
            <person name="Brusic V."/>
            <person name="Quackenbush J."/>
            <person name="Wahlestedt C."/>
            <person name="Mattick J.S."/>
            <person name="Hume D.A."/>
            <person name="Kai C."/>
            <person name="Sasaki D."/>
            <person name="Tomaru Y."/>
            <person name="Fukuda S."/>
            <person name="Kanamori-Katayama M."/>
            <person name="Suzuki M."/>
            <person name="Aoki J."/>
            <person name="Arakawa T."/>
            <person name="Iida J."/>
            <person name="Imamura K."/>
            <person name="Itoh M."/>
            <person name="Kato T."/>
            <person name="Kawaji H."/>
            <person name="Kawagashira N."/>
            <person name="Kawashima T."/>
            <person name="Kojima M."/>
            <person name="Kondo S."/>
            <person name="Konno H."/>
            <person name="Nakano K."/>
            <person name="Ninomiya N."/>
            <person name="Nishio T."/>
            <person name="Okada M."/>
            <person name="Plessy C."/>
            <person name="Shibata K."/>
            <person name="Shiraki T."/>
            <person name="Suzuki S."/>
            <person name="Tagami M."/>
            <person name="Waki K."/>
            <person name="Watahiki A."/>
            <person name="Okamura-Oho Y."/>
            <person name="Suzuki H."/>
            <person name="Kawai J."/>
            <person name="Hayashizaki Y."/>
        </authorList>
    </citation>
    <scope>NUCLEOTIDE SEQUENCE [LARGE SCALE MRNA]</scope>
    <source>
        <strain>C57BL/6J</strain>
        <tissue>Brain</tissue>
    </source>
</reference>
<reference key="2">
    <citation type="journal article" date="2004" name="Genome Res.">
        <title>The status, quality, and expansion of the NIH full-length cDNA project: the Mammalian Gene Collection (MGC).</title>
        <authorList>
            <consortium name="The MGC Project Team"/>
        </authorList>
    </citation>
    <scope>NUCLEOTIDE SEQUENCE [LARGE SCALE MRNA]</scope>
    <source>
        <strain>FVB/N</strain>
        <tissue>Salivary gland</tissue>
    </source>
</reference>
<reference key="3">
    <citation type="journal article" date="2009" name="Immunity">
        <title>The phagosomal proteome in interferon-gamma-activated macrophages.</title>
        <authorList>
            <person name="Trost M."/>
            <person name="English L."/>
            <person name="Lemieux S."/>
            <person name="Courcelles M."/>
            <person name="Desjardins M."/>
            <person name="Thibault P."/>
        </authorList>
    </citation>
    <scope>PHOSPHORYLATION [LARGE SCALE ANALYSIS] AT SER-169</scope>
    <scope>IDENTIFICATION BY MASS SPECTROMETRY [LARGE SCALE ANALYSIS]</scope>
</reference>
<reference key="4">
    <citation type="journal article" date="2010" name="Cell">
        <title>A tissue-specific atlas of mouse protein phosphorylation and expression.</title>
        <authorList>
            <person name="Huttlin E.L."/>
            <person name="Jedrychowski M.P."/>
            <person name="Elias J.E."/>
            <person name="Goswami T."/>
            <person name="Rad R."/>
            <person name="Beausoleil S.A."/>
            <person name="Villen J."/>
            <person name="Haas W."/>
            <person name="Sowa M.E."/>
            <person name="Gygi S.P."/>
        </authorList>
    </citation>
    <scope>IDENTIFICATION BY MASS SPECTROMETRY [LARGE SCALE ANALYSIS]</scope>
    <source>
        <tissue>Brain</tissue>
        <tissue>Lung</tissue>
        <tissue>Spleen</tissue>
        <tissue>Testis</tissue>
    </source>
</reference>
<reference key="5">
    <citation type="journal article" date="2018" name="Genes Cells">
        <title>TMEM55B contributes to lysosomal homeostasis and amino acid-induced mTORC1 activation.</title>
        <authorList>
            <person name="Hashimoto Y."/>
            <person name="Shirane M."/>
            <person name="Nakayama K.I."/>
        </authorList>
    </citation>
    <scope>FUNCTION</scope>
    <scope>SUBCELLULAR LOCATION</scope>
    <scope>INTERACTION WITH ATP6V0D1; LAMTOR1; RRAGA AND RRAGC</scope>
</reference>
<reference key="6">
    <citation type="journal article" date="2018" name="J. Cell Sci.">
        <title>TMEM55a localizes to macrophage phagosomes to downregulate phagocytosis.</title>
        <authorList>
            <person name="Morioka S."/>
            <person name="Nigorikawa K."/>
            <person name="Okada E."/>
            <person name="Tanaka Y."/>
            <person name="Kasuu Y."/>
            <person name="Yamada M."/>
            <person name="Kofuji S."/>
            <person name="Takasuga S."/>
            <person name="Nakanishi H."/>
            <person name="Sasaki T."/>
            <person name="Hazeki K."/>
        </authorList>
    </citation>
    <scope>SUBCELLULAR LOCATION</scope>
</reference>
<keyword id="KW-1003">Cell membrane</keyword>
<keyword id="KW-0968">Cytoplasmic vesicle</keyword>
<keyword id="KW-0967">Endosome</keyword>
<keyword id="KW-0378">Hydrolase</keyword>
<keyword id="KW-0443">Lipid metabolism</keyword>
<keyword id="KW-0458">Lysosome</keyword>
<keyword id="KW-0472">Membrane</keyword>
<keyword id="KW-0597">Phosphoprotein</keyword>
<keyword id="KW-1185">Reference proteome</keyword>
<keyword id="KW-0812">Transmembrane</keyword>
<keyword id="KW-1133">Transmembrane helix</keyword>
<comment type="function">
    <text evidence="2 6">Catalyzes the hydrolysis of phosphatidylinositol-4,5-bisphosphate (PtdIns-4,5-P2) to phosphatidylinositol-4-phosphate (PtdIns-4-P) (By similarity). Does not hydrolyze phosphatidylinositol 3,4,5-trisphosphate, phosphatidylinositol 3,4-bisphosphate, inositol 3,5-bisphosphate, inositol 3,4-bisphosphate, phosphatidylinositol 5-monophosphate, phosphatidylinositol 4-monophosphate and phosphatidylinositol 3-monophosphate (By similarity). Regulates lysosomal positioning by recruiting JIP4 to lysosomal membranes, thus inducing retrograde transport of lysosomes along microtubules (By similarity). Contributes to assembly of the V-ATPase complex in lipid rafts of the lysosomal membrane and to subsequent amino acid-dependent activation of mTORC1 (PubMed:29644770). May play a role in the regulation of cellular cholesterol metabolism (By similarity).</text>
</comment>
<comment type="catalytic activity">
    <reaction evidence="2">
        <text>a 1,2-diacyl-sn-glycero-3-phospho-(1D-myo-inositol-4,5-bisphosphate) + H2O = a 1,2-diacyl-sn-glycero-3-phospho-(1D-myo-inositol-5-phosphate) + phosphate</text>
        <dbReference type="Rhea" id="RHEA:25674"/>
        <dbReference type="ChEBI" id="CHEBI:15377"/>
        <dbReference type="ChEBI" id="CHEBI:43474"/>
        <dbReference type="ChEBI" id="CHEBI:57795"/>
        <dbReference type="ChEBI" id="CHEBI:58456"/>
        <dbReference type="EC" id="3.1.3.78"/>
    </reaction>
</comment>
<comment type="subunit">
    <text evidence="6">Interacts (via transmembrane domain) with ATP6V0D1 (PubMed:29644770). Interacts with LAMTOR1, RRAGA and RRAGC (PubMed:29644770).</text>
</comment>
<comment type="subcellular location">
    <subcellularLocation>
        <location evidence="5">Late endosome membrane</location>
        <topology evidence="3">Multi-pass membrane protein</topology>
    </subcellularLocation>
    <subcellularLocation>
        <location evidence="6">Lysosome membrane</location>
        <topology evidence="3">Multi-pass membrane protein</topology>
    </subcellularLocation>
    <subcellularLocation>
        <location evidence="5">Cell membrane</location>
        <topology evidence="3">Multi-pass membrane protein</topology>
    </subcellularLocation>
    <subcellularLocation>
        <location evidence="5">Cytoplasmic vesicle</location>
        <location evidence="5">Phagosome membrane</location>
        <topology evidence="3">Multi-pass membrane protein</topology>
    </subcellularLocation>
</comment>
<sequence>MAADGERSPLLSEAGDGGAGGNGLAGPGGSATGPGGGLTPSAPPYGAGKHAPPQAFPPFPEGHPAVLPGEDPPPYSPLTSPDSGSAPMITCRVCQSPINVEGKMHQHVVKCGVCNEATPIKNAPPGKKYVRCPCNCLLICKVTSQRIACPRPYCKRIINLGPVHPGPLSPEPQPMGVRVICGHCKNTFLWTEFTDRTLARCPHCRKVSSIGRRYPRKRCICCFLLGLLLAVTATGLAFGTWKHAQQYGGIYAAWAFVILLAVLCLGRALYWACMKVSHPVQNFS</sequence>
<accession>Q3TWL2</accession>
<protein>
    <recommendedName>
        <fullName>Type 1 phosphatidylinositol 4,5-bisphosphate 4-phosphatase</fullName>
        <shortName>Type 1 PtdIns-4,5-P2 4-Ptase</shortName>
        <ecNumber evidence="2">3.1.3.78</ecNumber>
    </recommendedName>
    <alternativeName>
        <fullName>PtdIns-4,5-P2 4-Ptase I</fullName>
    </alternativeName>
    <alternativeName>
        <fullName>Transmembrane protein 55B</fullName>
    </alternativeName>
</protein>
<gene>
    <name evidence="2" type="primary">Pip4p1</name>
    <name type="synonym">Tmem55b</name>
</gene>
<feature type="chain" id="PRO_0000235234" description="Type 1 phosphatidylinositol 4,5-bisphosphate 4-phosphatase">
    <location>
        <begin position="1"/>
        <end position="284"/>
    </location>
</feature>
<feature type="transmembrane region" description="Helical" evidence="3">
    <location>
        <begin position="219"/>
        <end position="239"/>
    </location>
</feature>
<feature type="transmembrane region" description="Helical" evidence="3">
    <location>
        <begin position="246"/>
        <end position="266"/>
    </location>
</feature>
<feature type="region of interest" description="Disordered" evidence="4">
    <location>
        <begin position="1"/>
        <end position="82"/>
    </location>
</feature>
<feature type="short sequence motif" description="CX5R motif">
    <location>
        <begin position="140"/>
        <end position="146"/>
    </location>
</feature>
<feature type="compositionally biased region" description="Gly residues" evidence="4">
    <location>
        <begin position="15"/>
        <end position="38"/>
    </location>
</feature>
<feature type="active site" evidence="1">
    <location>
        <position position="140"/>
    </location>
</feature>
<feature type="modified residue" description="Phosphoserine" evidence="7">
    <location>
        <position position="169"/>
    </location>
</feature>